<comment type="function">
    <text evidence="1">Catalyzes the NAD(H)-dependent interconversion of D-fructose 6-phosphate and D-mannitol 1-phosphate in the mannitol metabolic pathway.</text>
</comment>
<comment type="catalytic activity">
    <reaction>
        <text>D-mannitol 1-phosphate + NAD(+) = beta-D-fructose 6-phosphate + NADH + H(+)</text>
        <dbReference type="Rhea" id="RHEA:19661"/>
        <dbReference type="ChEBI" id="CHEBI:15378"/>
        <dbReference type="ChEBI" id="CHEBI:57540"/>
        <dbReference type="ChEBI" id="CHEBI:57634"/>
        <dbReference type="ChEBI" id="CHEBI:57945"/>
        <dbReference type="ChEBI" id="CHEBI:61381"/>
        <dbReference type="EC" id="1.1.1.17"/>
    </reaction>
</comment>
<comment type="subunit">
    <text evidence="1">Monomer.</text>
</comment>
<comment type="similarity">
    <text evidence="2">Belongs to the mannitol dehydrogenase family.</text>
</comment>
<protein>
    <recommendedName>
        <fullName>Mannitol-1-phosphate 5-dehydrogenase</fullName>
        <shortName>M1PDH</shortName>
        <shortName>MPD</shortName>
        <shortName>MPDH</shortName>
        <ecNumber>1.1.1.17</ecNumber>
    </recommendedName>
</protein>
<dbReference type="EC" id="1.1.1.17"/>
<dbReference type="EMBL" id="AM920437">
    <property type="protein sequence ID" value="CAP99368.1"/>
    <property type="molecule type" value="Genomic_DNA"/>
</dbReference>
<dbReference type="RefSeq" id="XP_002565979.1">
    <property type="nucleotide sequence ID" value="XM_002565933.1"/>
</dbReference>
<dbReference type="SMR" id="B6HRL5"/>
<dbReference type="STRING" id="500485.B6HRL5"/>
<dbReference type="GeneID" id="8305222"/>
<dbReference type="KEGG" id="pcs:N7525_004286"/>
<dbReference type="VEuPathDB" id="FungiDB:PCH_Pc22g20800"/>
<dbReference type="eggNOG" id="ENOG502QVPN">
    <property type="taxonomic scope" value="Eukaryota"/>
</dbReference>
<dbReference type="HOGENOM" id="CLU_036089_0_1_1"/>
<dbReference type="OMA" id="APFIERK"/>
<dbReference type="OrthoDB" id="418169at2759"/>
<dbReference type="BioCyc" id="PCHR:PC22G20800-MONOMER"/>
<dbReference type="Proteomes" id="UP000000724">
    <property type="component" value="Contig Pc00c22"/>
</dbReference>
<dbReference type="GO" id="GO:0005829">
    <property type="term" value="C:cytosol"/>
    <property type="evidence" value="ECO:0007669"/>
    <property type="project" value="TreeGrafter"/>
</dbReference>
<dbReference type="GO" id="GO:0008926">
    <property type="term" value="F:mannitol-1-phosphate 5-dehydrogenase activity"/>
    <property type="evidence" value="ECO:0007669"/>
    <property type="project" value="UniProtKB-EC"/>
</dbReference>
<dbReference type="GO" id="GO:0019592">
    <property type="term" value="P:mannitol catabolic process"/>
    <property type="evidence" value="ECO:0007669"/>
    <property type="project" value="TreeGrafter"/>
</dbReference>
<dbReference type="FunFam" id="3.40.50.720:FF:000316">
    <property type="entry name" value="Mannitol-1-phosphate 5-dehydrogenase"/>
    <property type="match status" value="1"/>
</dbReference>
<dbReference type="Gene3D" id="1.10.1040.10">
    <property type="entry name" value="N-(1-d-carboxylethyl)-l-norvaline Dehydrogenase, domain 2"/>
    <property type="match status" value="1"/>
</dbReference>
<dbReference type="Gene3D" id="3.40.50.720">
    <property type="entry name" value="NAD(P)-binding Rossmann-like Domain"/>
    <property type="match status" value="1"/>
</dbReference>
<dbReference type="HAMAP" id="MF_00196">
    <property type="entry name" value="Mannitol_dehydrog"/>
    <property type="match status" value="1"/>
</dbReference>
<dbReference type="InterPro" id="IPR008927">
    <property type="entry name" value="6-PGluconate_DH-like_C_sf"/>
</dbReference>
<dbReference type="InterPro" id="IPR013328">
    <property type="entry name" value="6PGD_dom2"/>
</dbReference>
<dbReference type="InterPro" id="IPR023028">
    <property type="entry name" value="Mannitol_1_phos_5_DH"/>
</dbReference>
<dbReference type="InterPro" id="IPR000669">
    <property type="entry name" value="Mannitol_DH"/>
</dbReference>
<dbReference type="InterPro" id="IPR013118">
    <property type="entry name" value="Mannitol_DH_C"/>
</dbReference>
<dbReference type="InterPro" id="IPR013131">
    <property type="entry name" value="Mannitol_DH_N"/>
</dbReference>
<dbReference type="InterPro" id="IPR036291">
    <property type="entry name" value="NAD(P)-bd_dom_sf"/>
</dbReference>
<dbReference type="NCBIfam" id="NF002652">
    <property type="entry name" value="PRK02318.2-5"/>
    <property type="match status" value="1"/>
</dbReference>
<dbReference type="PANTHER" id="PTHR30524:SF0">
    <property type="entry name" value="ALTRONATE OXIDOREDUCTASE-RELATED"/>
    <property type="match status" value="1"/>
</dbReference>
<dbReference type="PANTHER" id="PTHR30524">
    <property type="entry name" value="MANNITOL-1-PHOSPHATE 5-DEHYDROGENASE"/>
    <property type="match status" value="1"/>
</dbReference>
<dbReference type="Pfam" id="PF01232">
    <property type="entry name" value="Mannitol_dh"/>
    <property type="match status" value="1"/>
</dbReference>
<dbReference type="Pfam" id="PF08125">
    <property type="entry name" value="Mannitol_dh_C"/>
    <property type="match status" value="1"/>
</dbReference>
<dbReference type="PRINTS" id="PR00084">
    <property type="entry name" value="MTLDHDRGNASE"/>
</dbReference>
<dbReference type="SUPFAM" id="SSF48179">
    <property type="entry name" value="6-phosphogluconate dehydrogenase C-terminal domain-like"/>
    <property type="match status" value="1"/>
</dbReference>
<dbReference type="SUPFAM" id="SSF51735">
    <property type="entry name" value="NAD(P)-binding Rossmann-fold domains"/>
    <property type="match status" value="1"/>
</dbReference>
<keyword id="KW-0520">NAD</keyword>
<keyword id="KW-0560">Oxidoreductase</keyword>
<keyword id="KW-1185">Reference proteome</keyword>
<gene>
    <name type="ORF">Pc22g20800</name>
</gene>
<feature type="chain" id="PRO_0000371532" description="Mannitol-1-phosphate 5-dehydrogenase">
    <location>
        <begin position="1"/>
        <end position="388"/>
    </location>
</feature>
<feature type="active site" evidence="1">
    <location>
        <position position="213"/>
    </location>
</feature>
<feature type="binding site" evidence="1">
    <location>
        <begin position="5"/>
        <end position="16"/>
    </location>
    <ligand>
        <name>NAD(+)</name>
        <dbReference type="ChEBI" id="CHEBI:57540"/>
    </ligand>
</feature>
<reference key="1">
    <citation type="journal article" date="2008" name="Nat. Biotechnol.">
        <title>Genome sequencing and analysis of the filamentous fungus Penicillium chrysogenum.</title>
        <authorList>
            <person name="van den Berg M.A."/>
            <person name="Albang R."/>
            <person name="Albermann K."/>
            <person name="Badger J.H."/>
            <person name="Daran J.-M."/>
            <person name="Driessen A.J.M."/>
            <person name="Garcia-Estrada C."/>
            <person name="Fedorova N.D."/>
            <person name="Harris D.M."/>
            <person name="Heijne W.H.M."/>
            <person name="Joardar V.S."/>
            <person name="Kiel J.A.K.W."/>
            <person name="Kovalchuk A."/>
            <person name="Martin J.F."/>
            <person name="Nierman W.C."/>
            <person name="Nijland J.G."/>
            <person name="Pronk J.T."/>
            <person name="Roubos J.A."/>
            <person name="van der Klei I.J."/>
            <person name="van Peij N.N.M.E."/>
            <person name="Veenhuis M."/>
            <person name="von Doehren H."/>
            <person name="Wagner C."/>
            <person name="Wortman J.R."/>
            <person name="Bovenberg R.A.L."/>
        </authorList>
    </citation>
    <scope>NUCLEOTIDE SEQUENCE [LARGE SCALE GENOMIC DNA]</scope>
    <source>
        <strain>ATCC 28089 / DSM 1075 / NRRL 1951 / Wisconsin 54-1255</strain>
    </source>
</reference>
<name>MTLD_PENRW</name>
<sequence>MEKKAVHFGGGNIGRGFVAEFLHTAGYEVVFVDVMDSIITALQNTKSYEVTEVSDEGEATKTITNYRAINSKTHESDVINEISTATVVTCAVGPNILKFIAPAIAKGIDARTAATPLAVIACENAIGATDTLHHFIKDNTAQDRLGSMPDRARFANSAIDRIVPGQAADSGLNVRIEKFYEWAVESTPFGEFGHPDIPAIHWVSDLEPYIERKLFTVNTGHATAAYYGYNAGKKTIAEALHDSRIRGIVRDVLQETASLIIDKHEISAAEQQEYVETIITRISNPYLEDTVERVGRAPMRKVSRKERFIGPASQLAERGGKFQSLLGSLEMALRFQNVEGDEESVELAKILKENAPADAAVRLTGLDRDHPLFPHVVKVVDGVQSDAK</sequence>
<proteinExistence type="inferred from homology"/>
<evidence type="ECO:0000250" key="1"/>
<evidence type="ECO:0000305" key="2"/>
<organism>
    <name type="scientific">Penicillium rubens (strain ATCC 28089 / DSM 1075 / NRRL 1951 / Wisconsin 54-1255)</name>
    <name type="common">Penicillium chrysogenum</name>
    <dbReference type="NCBI Taxonomy" id="500485"/>
    <lineage>
        <taxon>Eukaryota</taxon>
        <taxon>Fungi</taxon>
        <taxon>Dikarya</taxon>
        <taxon>Ascomycota</taxon>
        <taxon>Pezizomycotina</taxon>
        <taxon>Eurotiomycetes</taxon>
        <taxon>Eurotiomycetidae</taxon>
        <taxon>Eurotiales</taxon>
        <taxon>Aspergillaceae</taxon>
        <taxon>Penicillium</taxon>
        <taxon>Penicillium chrysogenum species complex</taxon>
    </lineage>
</organism>
<accession>B6HRL5</accession>